<keyword id="KW-0158">Chromosome</keyword>
<keyword id="KW-0238">DNA-binding</keyword>
<keyword id="KW-0325">Glycoprotein</keyword>
<keyword id="KW-1017">Isopeptide bond</keyword>
<keyword id="KW-0544">Nucleosome core</keyword>
<keyword id="KW-0539">Nucleus</keyword>
<keyword id="KW-1185">Reference proteome</keyword>
<keyword id="KW-0832">Ubl conjugation</keyword>
<name>H2BL1_STRPU</name>
<protein>
    <recommendedName>
        <fullName>Late histone H2B.L1</fullName>
    </recommendedName>
</protein>
<comment type="function">
    <text>Core component of nucleosome. Nucleosomes wrap and compact DNA into chromatin, limiting DNA accessibility to the cellular machineries which require DNA as a template. Histones thereby play a central role in transcription regulation, DNA repair, DNA replication and chromosomal stability. DNA accessibility is regulated via a complex set of post-translational modifications of histones, also called histone code, and nucleosome remodeling.</text>
</comment>
<comment type="subunit">
    <text>The nucleosome is a histone octamer containing two molecules each of H2A, H2B, H3 and H4 assembled in one H3-H4 heterotetramer and two H2A-H2B heterodimers. The octamer wraps approximately 147 bp of DNA.</text>
</comment>
<comment type="subcellular location">
    <subcellularLocation>
        <location>Nucleus</location>
    </subcellularLocation>
    <subcellularLocation>
        <location>Chromosome</location>
    </subcellularLocation>
</comment>
<comment type="PTM">
    <text evidence="1">Monoubiquitination of Lys-118 gives a specific tag for epigenetic transcriptional activation and is also prerequisite for histone H3 'Lys-4' and 'Lys-79' methylation.</text>
</comment>
<comment type="PTM">
    <text evidence="1">GlcNAcylation at Ser-110 promotes monoubiquitination of Lys-118. It fluctuates in response to extracellular glucose, and associates with transcribed genes (By similarity).</text>
</comment>
<comment type="similarity">
    <text evidence="3">Belongs to the histone H2B family.</text>
</comment>
<proteinExistence type="evidence at protein level"/>
<evidence type="ECO:0000250" key="1"/>
<evidence type="ECO:0000256" key="2">
    <source>
        <dbReference type="SAM" id="MobiDB-lite"/>
    </source>
</evidence>
<evidence type="ECO:0000305" key="3"/>
<evidence type="ECO:0000305" key="4">
    <source>
    </source>
</evidence>
<sequence>MPAKAQPAGKKGSKKAKAPRPSGGKKRRRRRKESYGIYIYKVLKQVHPDTGISSRAMSIMNSFVNDVFERIAAEASRLAHYNKKSTITSREVQTVVRLLLPGELAKHAVSEGTKAVTKYTTSK</sequence>
<organism>
    <name type="scientific">Strongylocentrotus purpuratus</name>
    <name type="common">Purple sea urchin</name>
    <dbReference type="NCBI Taxonomy" id="7668"/>
    <lineage>
        <taxon>Eukaryota</taxon>
        <taxon>Metazoa</taxon>
        <taxon>Echinodermata</taxon>
        <taxon>Eleutherozoa</taxon>
        <taxon>Echinozoa</taxon>
        <taxon>Echinoidea</taxon>
        <taxon>Euechinoidea</taxon>
        <taxon>Echinacea</taxon>
        <taxon>Camarodonta</taxon>
        <taxon>Echinidea</taxon>
        <taxon>Strongylocentrotidae</taxon>
        <taxon>Strongylocentrotus</taxon>
    </lineage>
</organism>
<feature type="initiator methionine" description="Removed" evidence="1">
    <location>
        <position position="1"/>
    </location>
</feature>
<feature type="chain" id="PRO_0000071898" description="Late histone H2B.L1">
    <location>
        <begin position="2"/>
        <end position="123"/>
    </location>
</feature>
<feature type="region of interest" description="Disordered" evidence="2">
    <location>
        <begin position="1"/>
        <end position="33"/>
    </location>
</feature>
<feature type="compositionally biased region" description="Low complexity" evidence="2">
    <location>
        <begin position="1"/>
        <end position="10"/>
    </location>
</feature>
<feature type="compositionally biased region" description="Basic residues" evidence="2">
    <location>
        <begin position="11"/>
        <end position="32"/>
    </location>
</feature>
<feature type="glycosylation site" description="O-linked (GlcNAc) serine" evidence="1">
    <location>
        <position position="110"/>
    </location>
</feature>
<feature type="cross-link" description="Glycyl lysine isopeptide (Lys-Gly) (interchain with G-Cter in ubiquitin)" evidence="4">
    <location>
        <position position="118"/>
    </location>
</feature>
<accession>P16888</accession>
<dbReference type="EMBL" id="X06640">
    <property type="protein sequence ID" value="CAA29848.1"/>
    <property type="molecule type" value="Genomic_DNA"/>
</dbReference>
<dbReference type="PIR" id="S01619">
    <property type="entry name" value="S01619"/>
</dbReference>
<dbReference type="RefSeq" id="NP_999717.1">
    <property type="nucleotide sequence ID" value="NM_214552.1"/>
</dbReference>
<dbReference type="SMR" id="P16888"/>
<dbReference type="FunCoup" id="P16888">
    <property type="interactions" value="1625"/>
</dbReference>
<dbReference type="STRING" id="7668.P16888"/>
<dbReference type="iPTMnet" id="P16888"/>
<dbReference type="EnsemblMetazoa" id="NM_214552">
    <property type="protein sequence ID" value="NP_999717"/>
    <property type="gene ID" value="LOC373347"/>
</dbReference>
<dbReference type="GeneID" id="373347"/>
<dbReference type="KEGG" id="spu:373347"/>
<dbReference type="eggNOG" id="KOG1744">
    <property type="taxonomic scope" value="Eukaryota"/>
</dbReference>
<dbReference type="HOGENOM" id="CLU_075666_2_1_1"/>
<dbReference type="InParanoid" id="P16888"/>
<dbReference type="OrthoDB" id="10036121at2759"/>
<dbReference type="Proteomes" id="UP000007110">
    <property type="component" value="Unassembled WGS sequence"/>
</dbReference>
<dbReference type="GO" id="GO:0000786">
    <property type="term" value="C:nucleosome"/>
    <property type="evidence" value="ECO:0007669"/>
    <property type="project" value="UniProtKB-KW"/>
</dbReference>
<dbReference type="GO" id="GO:0005634">
    <property type="term" value="C:nucleus"/>
    <property type="evidence" value="ECO:0007669"/>
    <property type="project" value="UniProtKB-SubCell"/>
</dbReference>
<dbReference type="GO" id="GO:0003677">
    <property type="term" value="F:DNA binding"/>
    <property type="evidence" value="ECO:0007669"/>
    <property type="project" value="UniProtKB-KW"/>
</dbReference>
<dbReference type="GO" id="GO:0046982">
    <property type="term" value="F:protein heterodimerization activity"/>
    <property type="evidence" value="ECO:0007669"/>
    <property type="project" value="InterPro"/>
</dbReference>
<dbReference type="GO" id="GO:0030527">
    <property type="term" value="F:structural constituent of chromatin"/>
    <property type="evidence" value="ECO:0007669"/>
    <property type="project" value="InterPro"/>
</dbReference>
<dbReference type="CDD" id="cd22910">
    <property type="entry name" value="HFD_H2B"/>
    <property type="match status" value="1"/>
</dbReference>
<dbReference type="FunFam" id="1.10.20.10:FF:000016">
    <property type="entry name" value="Histone H2B"/>
    <property type="match status" value="1"/>
</dbReference>
<dbReference type="Gene3D" id="1.10.20.10">
    <property type="entry name" value="Histone, subunit A"/>
    <property type="match status" value="1"/>
</dbReference>
<dbReference type="InterPro" id="IPR009072">
    <property type="entry name" value="Histone-fold"/>
</dbReference>
<dbReference type="InterPro" id="IPR007125">
    <property type="entry name" value="Histone_H2A/H2B/H3"/>
</dbReference>
<dbReference type="InterPro" id="IPR000558">
    <property type="entry name" value="Histone_H2B"/>
</dbReference>
<dbReference type="InterPro" id="IPR055333">
    <property type="entry name" value="HISTONE_H2B_site"/>
</dbReference>
<dbReference type="PANTHER" id="PTHR23428">
    <property type="entry name" value="HISTONE H2B"/>
    <property type="match status" value="1"/>
</dbReference>
<dbReference type="Pfam" id="PF00125">
    <property type="entry name" value="Histone"/>
    <property type="match status" value="1"/>
</dbReference>
<dbReference type="PRINTS" id="PR00621">
    <property type="entry name" value="HISTONEH2B"/>
</dbReference>
<dbReference type="SMART" id="SM00427">
    <property type="entry name" value="H2B"/>
    <property type="match status" value="1"/>
</dbReference>
<dbReference type="SUPFAM" id="SSF47113">
    <property type="entry name" value="Histone-fold"/>
    <property type="match status" value="1"/>
</dbReference>
<dbReference type="PROSITE" id="PS00357">
    <property type="entry name" value="HISTONE_H2B"/>
    <property type="match status" value="1"/>
</dbReference>
<reference key="1">
    <citation type="journal article" date="1987" name="Nucleic Acids Res.">
        <title>Evolution of late H2A, H2B, and H4 histone genes of the sea urchin, Strongylocentrotus purpuratus.</title>
        <authorList>
            <person name="Maxson R."/>
            <person name="Mohun T."/>
            <person name="Gormezano G."/>
            <person name="Kedes L."/>
        </authorList>
    </citation>
    <scope>NUCLEOTIDE SEQUENCE [GENOMIC DNA]</scope>
</reference>
<reference key="2">
    <citation type="journal article" date="1995" name="Dev. Genet.">
        <title>Embryonic regulation of histone ubiquitination in the sea urchin.</title>
        <authorList>
            <person name="Jasinskiene N."/>
            <person name="Jasinskas A."/>
            <person name="Langmore J.P."/>
        </authorList>
    </citation>
    <scope>UBIQUITINATION</scope>
</reference>